<proteinExistence type="inferred from homology"/>
<keyword id="KW-0342">GTP-binding</keyword>
<keyword id="KW-0506">mRNA capping</keyword>
<keyword id="KW-0507">mRNA processing</keyword>
<keyword id="KW-0547">Nucleotide-binding</keyword>
<keyword id="KW-0548">Nucleotidyltransferase</keyword>
<keyword id="KW-0539">Nucleus</keyword>
<keyword id="KW-1185">Reference proteome</keyword>
<keyword id="KW-0808">Transferase</keyword>
<name>MCE1_DEBHA</name>
<protein>
    <recommendedName>
        <fullName>mRNA-capping enzyme subunit alpha</fullName>
    </recommendedName>
    <alternativeName>
        <fullName>GTP--RNA guanylyltransferase</fullName>
        <shortName>GTase</shortName>
    </alternativeName>
    <alternativeName>
        <fullName>mRNA guanylyltransferase</fullName>
        <ecNumber evidence="2">2.7.7.50</ecNumber>
    </alternativeName>
</protein>
<reference key="1">
    <citation type="journal article" date="2004" name="Nature">
        <title>Genome evolution in yeasts.</title>
        <authorList>
            <person name="Dujon B."/>
            <person name="Sherman D."/>
            <person name="Fischer G."/>
            <person name="Durrens P."/>
            <person name="Casaregola S."/>
            <person name="Lafontaine I."/>
            <person name="de Montigny J."/>
            <person name="Marck C."/>
            <person name="Neuveglise C."/>
            <person name="Talla E."/>
            <person name="Goffard N."/>
            <person name="Frangeul L."/>
            <person name="Aigle M."/>
            <person name="Anthouard V."/>
            <person name="Babour A."/>
            <person name="Barbe V."/>
            <person name="Barnay S."/>
            <person name="Blanchin S."/>
            <person name="Beckerich J.-M."/>
            <person name="Beyne E."/>
            <person name="Bleykasten C."/>
            <person name="Boisrame A."/>
            <person name="Boyer J."/>
            <person name="Cattolico L."/>
            <person name="Confanioleri F."/>
            <person name="de Daruvar A."/>
            <person name="Despons L."/>
            <person name="Fabre E."/>
            <person name="Fairhead C."/>
            <person name="Ferry-Dumazet H."/>
            <person name="Groppi A."/>
            <person name="Hantraye F."/>
            <person name="Hennequin C."/>
            <person name="Jauniaux N."/>
            <person name="Joyet P."/>
            <person name="Kachouri R."/>
            <person name="Kerrest A."/>
            <person name="Koszul R."/>
            <person name="Lemaire M."/>
            <person name="Lesur I."/>
            <person name="Ma L."/>
            <person name="Muller H."/>
            <person name="Nicaud J.-M."/>
            <person name="Nikolski M."/>
            <person name="Oztas S."/>
            <person name="Ozier-Kalogeropoulos O."/>
            <person name="Pellenz S."/>
            <person name="Potier S."/>
            <person name="Richard G.-F."/>
            <person name="Straub M.-L."/>
            <person name="Suleau A."/>
            <person name="Swennen D."/>
            <person name="Tekaia F."/>
            <person name="Wesolowski-Louvel M."/>
            <person name="Westhof E."/>
            <person name="Wirth B."/>
            <person name="Zeniou-Meyer M."/>
            <person name="Zivanovic Y."/>
            <person name="Bolotin-Fukuhara M."/>
            <person name="Thierry A."/>
            <person name="Bouchier C."/>
            <person name="Caudron B."/>
            <person name="Scarpelli C."/>
            <person name="Gaillardin C."/>
            <person name="Weissenbach J."/>
            <person name="Wincker P."/>
            <person name="Souciet J.-L."/>
        </authorList>
    </citation>
    <scope>NUCLEOTIDE SEQUENCE [LARGE SCALE GENOMIC DNA]</scope>
    <source>
        <strain>ATCC 36239 / CBS 767 / BCRC 21394 / JCM 1990 / NBRC 0083 / IGC 2968</strain>
    </source>
</reference>
<evidence type="ECO:0000250" key="1"/>
<evidence type="ECO:0000250" key="2">
    <source>
        <dbReference type="UniProtKB" id="Q01159"/>
    </source>
</evidence>
<evidence type="ECO:0000256" key="3">
    <source>
        <dbReference type="SAM" id="MobiDB-lite"/>
    </source>
</evidence>
<evidence type="ECO:0000305" key="4"/>
<organism>
    <name type="scientific">Debaryomyces hansenii (strain ATCC 36239 / CBS 767 / BCRC 21394 / JCM 1990 / NBRC 0083 / IGC 2968)</name>
    <name type="common">Yeast</name>
    <name type="synonym">Torulaspora hansenii</name>
    <dbReference type="NCBI Taxonomy" id="284592"/>
    <lineage>
        <taxon>Eukaryota</taxon>
        <taxon>Fungi</taxon>
        <taxon>Dikarya</taxon>
        <taxon>Ascomycota</taxon>
        <taxon>Saccharomycotina</taxon>
        <taxon>Pichiomycetes</taxon>
        <taxon>Debaryomycetaceae</taxon>
        <taxon>Debaryomyces</taxon>
    </lineage>
</organism>
<gene>
    <name type="primary">CEG1</name>
    <name type="ordered locus">DEHA2D03322g</name>
</gene>
<comment type="function">
    <text evidence="2">Second step of mRNA capping. Transfer of the GMP moiety of GTP to the 5'-end of RNA via an enzyme-GMP covalent reaction intermediate.</text>
</comment>
<comment type="catalytic activity">
    <reaction evidence="2">
        <text>a 5'-end diphospho-ribonucleoside in mRNA + GTP + H(+) = a 5'-end (5'-triphosphoguanosine)-ribonucleoside in mRNA + diphosphate</text>
        <dbReference type="Rhea" id="RHEA:67012"/>
        <dbReference type="Rhea" id="RHEA-COMP:17165"/>
        <dbReference type="Rhea" id="RHEA-COMP:17166"/>
        <dbReference type="ChEBI" id="CHEBI:15378"/>
        <dbReference type="ChEBI" id="CHEBI:33019"/>
        <dbReference type="ChEBI" id="CHEBI:37565"/>
        <dbReference type="ChEBI" id="CHEBI:167616"/>
        <dbReference type="ChEBI" id="CHEBI:167617"/>
        <dbReference type="EC" id="2.7.7.50"/>
    </reaction>
    <physiologicalReaction direction="left-to-right" evidence="2">
        <dbReference type="Rhea" id="RHEA:67013"/>
    </physiologicalReaction>
</comment>
<comment type="subunit">
    <text evidence="2">Heterodimer. The mRNA-capping enzyme is composed of two separate chains alpha and beta, respectively a mRNA guanylyltransferase and an mRNA 5'-triphosphate monophosphatase.</text>
</comment>
<comment type="subcellular location">
    <subcellularLocation>
        <location evidence="1">Nucleus</location>
    </subcellularLocation>
</comment>
<comment type="similarity">
    <text evidence="4">Belongs to the eukaryotic GTase family.</text>
</comment>
<sequence>MIQLEERDMPEIPGTILDRNETQELRLMVADLLGRRNPSFPGAQPISFERYHLNDTLMNKDYYVCEKSDGLRCLLFIINHPERGEGVFLITRENDYYYIPNIHFPLTNNEEKGKTYHHGTLLDGELVLETKNVPEPVLRFCIFDALAINGKDITKRHLPKRLGYITEQVMKPFDNFKRKNPEIVNAPDFPFKVSFKLMTSSYHADDVLSKMDQLFHESDGLIFTCAETPYVFGTDSTLLKWKPAHENTVDYKMEMIFKKFQDPDLDPRDPDSTYTDYDSKPELIKLRVWKGGADYEDFTKLSLENEDWEKLKNLRQPLQGRIVECRKKLSDPGFWEMLRFRNDKSNGNHISVVDKILHSIQDGVSEEELIEACPKIGKAWKKRIYEKSQGSRSSYSETGRSHPEPNREDEPASKRTKIDMEEPEPNGFGGSTTNHQNASKQNSGEFQDIPTYEDSDDE</sequence>
<dbReference type="EC" id="2.7.7.50" evidence="2"/>
<dbReference type="EMBL" id="CR382136">
    <property type="protein sequence ID" value="CAG86747.2"/>
    <property type="molecule type" value="Genomic_DNA"/>
</dbReference>
<dbReference type="RefSeq" id="XP_458612.2">
    <property type="nucleotide sequence ID" value="XM_458612.1"/>
</dbReference>
<dbReference type="SMR" id="Q6BT58"/>
<dbReference type="FunCoup" id="Q6BT58">
    <property type="interactions" value="456"/>
</dbReference>
<dbReference type="STRING" id="284592.Q6BT58"/>
<dbReference type="GeneID" id="2901066"/>
<dbReference type="KEGG" id="dha:DEHA2D03322g"/>
<dbReference type="eggNOG" id="KOG2386">
    <property type="taxonomic scope" value="Eukaryota"/>
</dbReference>
<dbReference type="HOGENOM" id="CLU_021710_0_2_1"/>
<dbReference type="InParanoid" id="Q6BT58"/>
<dbReference type="OMA" id="KDYYVCE"/>
<dbReference type="OrthoDB" id="200924at2759"/>
<dbReference type="Proteomes" id="UP000000599">
    <property type="component" value="Chromosome D"/>
</dbReference>
<dbReference type="GO" id="GO:0031533">
    <property type="term" value="C:mRNA capping enzyme complex"/>
    <property type="evidence" value="ECO:0007669"/>
    <property type="project" value="EnsemblFungi"/>
</dbReference>
<dbReference type="GO" id="GO:0005524">
    <property type="term" value="F:ATP binding"/>
    <property type="evidence" value="ECO:0007669"/>
    <property type="project" value="InterPro"/>
</dbReference>
<dbReference type="GO" id="GO:0005525">
    <property type="term" value="F:GTP binding"/>
    <property type="evidence" value="ECO:0007669"/>
    <property type="project" value="UniProtKB-KW"/>
</dbReference>
<dbReference type="GO" id="GO:0004484">
    <property type="term" value="F:mRNA guanylyltransferase activity"/>
    <property type="evidence" value="ECO:0007669"/>
    <property type="project" value="UniProtKB-EC"/>
</dbReference>
<dbReference type="GO" id="GO:0099122">
    <property type="term" value="F:RNA polymerase II C-terminal domain binding"/>
    <property type="evidence" value="ECO:0007669"/>
    <property type="project" value="EnsemblFungi"/>
</dbReference>
<dbReference type="GO" id="GO:0006370">
    <property type="term" value="P:7-methylguanosine mRNA capping"/>
    <property type="evidence" value="ECO:0007669"/>
    <property type="project" value="UniProtKB-KW"/>
</dbReference>
<dbReference type="GO" id="GO:0045944">
    <property type="term" value="P:positive regulation of transcription by RNA polymerase II"/>
    <property type="evidence" value="ECO:0007669"/>
    <property type="project" value="EnsemblFungi"/>
</dbReference>
<dbReference type="GO" id="GO:0008033">
    <property type="term" value="P:tRNA processing"/>
    <property type="evidence" value="ECO:0007669"/>
    <property type="project" value="EnsemblFungi"/>
</dbReference>
<dbReference type="CDD" id="cd07895">
    <property type="entry name" value="Adenylation_mRNA_capping"/>
    <property type="match status" value="1"/>
</dbReference>
<dbReference type="FunFam" id="2.40.50.140:FF:000542">
    <property type="entry name" value="mRNA-capping enzyme subunit alpha"/>
    <property type="match status" value="1"/>
</dbReference>
<dbReference type="Gene3D" id="3.30.1490.430">
    <property type="match status" value="1"/>
</dbReference>
<dbReference type="Gene3D" id="3.30.470.30">
    <property type="entry name" value="DNA ligase/mRNA capping enzyme"/>
    <property type="match status" value="1"/>
</dbReference>
<dbReference type="Gene3D" id="2.40.50.140">
    <property type="entry name" value="Nucleic acid-binding proteins"/>
    <property type="match status" value="1"/>
</dbReference>
<dbReference type="InterPro" id="IPR001339">
    <property type="entry name" value="mRNA_cap_enzyme_adenylation"/>
</dbReference>
<dbReference type="InterPro" id="IPR017075">
    <property type="entry name" value="mRNA_cap_enzyme_alpha"/>
</dbReference>
<dbReference type="InterPro" id="IPR013846">
    <property type="entry name" value="mRNA_cap_enzyme_C"/>
</dbReference>
<dbReference type="InterPro" id="IPR051029">
    <property type="entry name" value="mRNA_Capping_Enz/RNA_Phosphat"/>
</dbReference>
<dbReference type="InterPro" id="IPR012340">
    <property type="entry name" value="NA-bd_OB-fold"/>
</dbReference>
<dbReference type="PANTHER" id="PTHR10367">
    <property type="entry name" value="MRNA-CAPPING ENZYME"/>
    <property type="match status" value="1"/>
</dbReference>
<dbReference type="PANTHER" id="PTHR10367:SF17">
    <property type="entry name" value="MRNA-CAPPING ENZYME"/>
    <property type="match status" value="1"/>
</dbReference>
<dbReference type="Pfam" id="PF03919">
    <property type="entry name" value="mRNA_cap_C"/>
    <property type="match status" value="1"/>
</dbReference>
<dbReference type="Pfam" id="PF01331">
    <property type="entry name" value="mRNA_cap_enzyme"/>
    <property type="match status" value="1"/>
</dbReference>
<dbReference type="PIRSF" id="PIRSF036959">
    <property type="entry name" value="mRNA_cap_alpha"/>
    <property type="match status" value="1"/>
</dbReference>
<dbReference type="SUPFAM" id="SSF56091">
    <property type="entry name" value="DNA ligase/mRNA capping enzyme, catalytic domain"/>
    <property type="match status" value="1"/>
</dbReference>
<dbReference type="SUPFAM" id="SSF50249">
    <property type="entry name" value="Nucleic acid-binding proteins"/>
    <property type="match status" value="1"/>
</dbReference>
<accession>Q6BT58</accession>
<feature type="chain" id="PRO_0000210101" description="mRNA-capping enzyme subunit alpha">
    <location>
        <begin position="1"/>
        <end position="458"/>
    </location>
</feature>
<feature type="region of interest" description="Disordered" evidence="3">
    <location>
        <begin position="387"/>
        <end position="458"/>
    </location>
</feature>
<feature type="compositionally biased region" description="Polar residues" evidence="3">
    <location>
        <begin position="388"/>
        <end position="398"/>
    </location>
</feature>
<feature type="compositionally biased region" description="Basic and acidic residues" evidence="3">
    <location>
        <begin position="399"/>
        <end position="420"/>
    </location>
</feature>
<feature type="compositionally biased region" description="Polar residues" evidence="3">
    <location>
        <begin position="431"/>
        <end position="445"/>
    </location>
</feature>
<feature type="active site" description="N6-GMP-lysine intermediate" evidence="1">
    <location>
        <position position="67"/>
    </location>
</feature>